<sequence length="621" mass="68938">MPPFELGDPIPSETAHAVSVSLPTWSANVGYEEGQDWVVKRMATGYPRFFIHRTIQAFAADIVATHVSTKAKRTSDITAMLFPTPTIASRCVDFIRSRAPADVCSNIEVVNLVLDMSDPEARALEPLCPSISAVIMPQDGFPFAKQYWQHSGDGVSSRRAEFCHGLFKDGLLRPDTELRNAAVSAAKPCRGPKRYQRQASLDAGGNQQTIMHGHIHRATGETAMIQETSRFLEERFGRNLDLSFVHPAKSAIKRRIAGALRSADHDLGGSPSLSEKQMSSNTRGIANLREEDIYLFPCGMNAIFHAHRALYSIRTPPGSTPLKSVNFGFPYVDTLKILEKFNPSGALFYGHGSKSDLDDLETRLESGERYLALFCEFPGNPLLTCPDLVRIRELADKYEFAVVVDETIGTFANVNVLQFADIVVSSLTKIFSGDCNVMGGGAIFNPNSRYYSALKSFVQQQLEDTYWPEDVIFMERNSRDFVARIDRVNANAEAICRVLQDHPLVKTLYYPKYNDSRANYEAVKLPQGGYGGLISVVLKGKKQAVAFYDAIETAKGPSLGTNFTLTSPYVLLAHYQELDWAEQYGVDRNLIRISVGLEGTDELINVFTRALKVAEEQSQYP</sequence>
<evidence type="ECO:0000250" key="1"/>
<evidence type="ECO:0000255" key="2"/>
<evidence type="ECO:0000305" key="3"/>
<keyword id="KW-0028">Amino-acid biosynthesis</keyword>
<keyword id="KW-0486">Methionine biosynthesis</keyword>
<keyword id="KW-0663">Pyridoxal phosphate</keyword>
<keyword id="KW-1185">Reference proteome</keyword>
<keyword id="KW-0808">Transferase</keyword>
<gene>
    <name type="primary">met-7</name>
    <name type="ORF">NCU02430</name>
</gene>
<organism>
    <name type="scientific">Neurospora crassa (strain ATCC 24698 / 74-OR23-1A / CBS 708.71 / DSM 1257 / FGSC 987)</name>
    <dbReference type="NCBI Taxonomy" id="367110"/>
    <lineage>
        <taxon>Eukaryota</taxon>
        <taxon>Fungi</taxon>
        <taxon>Dikarya</taxon>
        <taxon>Ascomycota</taxon>
        <taxon>Pezizomycotina</taxon>
        <taxon>Sordariomycetes</taxon>
        <taxon>Sordariomycetidae</taxon>
        <taxon>Sordariales</taxon>
        <taxon>Sordariaceae</taxon>
        <taxon>Neurospora</taxon>
    </lineage>
</organism>
<name>MET7_NEUCR</name>
<comment type="function">
    <text evidence="1">Catalyzes the formation of L-cystathionine from O-succinyl-L-homoserine (OSHS) and L-cysteine, via a gamma-replacement reaction. In the absence of thiol, catalyzes gamma-elimination to form 2-oxobutanoate, succinate and ammonia (By similarity).</text>
</comment>
<comment type="catalytic activity">
    <reaction>
        <text>O-succinyl-L-homoserine + L-cysteine = L,L-cystathionine + succinate + H(+)</text>
        <dbReference type="Rhea" id="RHEA:20397"/>
        <dbReference type="ChEBI" id="CHEBI:15378"/>
        <dbReference type="ChEBI" id="CHEBI:30031"/>
        <dbReference type="ChEBI" id="CHEBI:35235"/>
        <dbReference type="ChEBI" id="CHEBI:57661"/>
        <dbReference type="ChEBI" id="CHEBI:58161"/>
        <dbReference type="EC" id="2.5.1.48"/>
    </reaction>
</comment>
<comment type="cofactor">
    <cofactor>
        <name>pyridoxal 5'-phosphate</name>
        <dbReference type="ChEBI" id="CHEBI:597326"/>
    </cofactor>
</comment>
<comment type="pathway">
    <text>Amino-acid biosynthesis; L-methionine biosynthesis via de novo pathway; L-cystathionine from O-succinyl-L-homoserine: step 1/1.</text>
</comment>
<comment type="subunit">
    <text>Both met-3 and met-7 are required to form a functional cystathionine gamma-synthase.</text>
</comment>
<comment type="similarity">
    <text evidence="3">Belongs to the trans-sulfuration enzymes family. MET7 subfamily.</text>
</comment>
<dbReference type="EC" id="2.5.1.48"/>
<dbReference type="EMBL" id="CM002242">
    <property type="protein sequence ID" value="EAA30199.2"/>
    <property type="molecule type" value="Genomic_DNA"/>
</dbReference>
<dbReference type="EMBL" id="M64066">
    <property type="status" value="NOT_ANNOTATED_CDS"/>
    <property type="molecule type" value="Genomic_DNA"/>
</dbReference>
<dbReference type="PIR" id="JQ1524">
    <property type="entry name" value="JQ1524"/>
</dbReference>
<dbReference type="RefSeq" id="XP_959435.2">
    <property type="nucleotide sequence ID" value="XM_954342.3"/>
</dbReference>
<dbReference type="SMR" id="P38675"/>
<dbReference type="FunCoup" id="P38675">
    <property type="interactions" value="167"/>
</dbReference>
<dbReference type="STRING" id="367110.P38675"/>
<dbReference type="PaxDb" id="5141-EFNCRP00000003145"/>
<dbReference type="EnsemblFungi" id="EAA30199">
    <property type="protein sequence ID" value="EAA30199"/>
    <property type="gene ID" value="NCU02430"/>
</dbReference>
<dbReference type="GeneID" id="3875582"/>
<dbReference type="KEGG" id="ncr:NCU02430"/>
<dbReference type="VEuPathDB" id="FungiDB:NCU02430"/>
<dbReference type="HOGENOM" id="CLU_011302_1_0_1"/>
<dbReference type="InParanoid" id="P38675"/>
<dbReference type="OMA" id="FPVAKQY"/>
<dbReference type="OrthoDB" id="10047078at2759"/>
<dbReference type="UniPathway" id="UPA00051">
    <property type="reaction ID" value="UER00077"/>
</dbReference>
<dbReference type="Proteomes" id="UP000001805">
    <property type="component" value="Chromosome 7, Linkage Group VII"/>
</dbReference>
<dbReference type="GO" id="GO:0003962">
    <property type="term" value="F:cystathionine gamma-synthase activity"/>
    <property type="evidence" value="ECO:0000318"/>
    <property type="project" value="GO_Central"/>
</dbReference>
<dbReference type="GO" id="GO:0030170">
    <property type="term" value="F:pyridoxal phosphate binding"/>
    <property type="evidence" value="ECO:0007669"/>
    <property type="project" value="InterPro"/>
</dbReference>
<dbReference type="GO" id="GO:0009086">
    <property type="term" value="P:methionine biosynthetic process"/>
    <property type="evidence" value="ECO:0007669"/>
    <property type="project" value="UniProtKB-KW"/>
</dbReference>
<dbReference type="GO" id="GO:0019346">
    <property type="term" value="P:transsulfuration"/>
    <property type="evidence" value="ECO:0000318"/>
    <property type="project" value="GO_Central"/>
</dbReference>
<dbReference type="FunFam" id="3.40.640.10:FF:000111">
    <property type="entry name" value="Cystathionine gamma-synthase"/>
    <property type="match status" value="1"/>
</dbReference>
<dbReference type="FunFam" id="3.90.1150.10:FF:000063">
    <property type="entry name" value="Probable cystathionine gamma-synthase"/>
    <property type="match status" value="1"/>
</dbReference>
<dbReference type="Gene3D" id="3.90.1150.10">
    <property type="entry name" value="Aspartate Aminotransferase, domain 1"/>
    <property type="match status" value="1"/>
</dbReference>
<dbReference type="Gene3D" id="3.40.640.10">
    <property type="entry name" value="Type I PLP-dependent aspartate aminotransferase-like (Major domain)"/>
    <property type="match status" value="1"/>
</dbReference>
<dbReference type="InterPro" id="IPR000277">
    <property type="entry name" value="Cys/Met-Metab_PyrdxlP-dep_enz"/>
</dbReference>
<dbReference type="InterPro" id="IPR015424">
    <property type="entry name" value="PyrdxlP-dep_Trfase"/>
</dbReference>
<dbReference type="InterPro" id="IPR015421">
    <property type="entry name" value="PyrdxlP-dep_Trfase_major"/>
</dbReference>
<dbReference type="InterPro" id="IPR015422">
    <property type="entry name" value="PyrdxlP-dep_Trfase_small"/>
</dbReference>
<dbReference type="InterPro" id="IPR051750">
    <property type="entry name" value="Trans-sulfuration_enzymes"/>
</dbReference>
<dbReference type="PANTHER" id="PTHR42699">
    <property type="match status" value="1"/>
</dbReference>
<dbReference type="PANTHER" id="PTHR42699:SF1">
    <property type="entry name" value="CYSTATHIONINE GAMMA-SYNTHASE-RELATED"/>
    <property type="match status" value="1"/>
</dbReference>
<dbReference type="Pfam" id="PF01053">
    <property type="entry name" value="Cys_Met_Meta_PP"/>
    <property type="match status" value="1"/>
</dbReference>
<dbReference type="SUPFAM" id="SSF53383">
    <property type="entry name" value="PLP-dependent transferases"/>
    <property type="match status" value="1"/>
</dbReference>
<proteinExistence type="inferred from homology"/>
<reference key="1">
    <citation type="journal article" date="2003" name="Nature">
        <title>The genome sequence of the filamentous fungus Neurospora crassa.</title>
        <authorList>
            <person name="Galagan J.E."/>
            <person name="Calvo S.E."/>
            <person name="Borkovich K.A."/>
            <person name="Selker E.U."/>
            <person name="Read N.D."/>
            <person name="Jaffe D.B."/>
            <person name="FitzHugh W."/>
            <person name="Ma L.-J."/>
            <person name="Smirnov S."/>
            <person name="Purcell S."/>
            <person name="Rehman B."/>
            <person name="Elkins T."/>
            <person name="Engels R."/>
            <person name="Wang S."/>
            <person name="Nielsen C.B."/>
            <person name="Butler J."/>
            <person name="Endrizzi M."/>
            <person name="Qui D."/>
            <person name="Ianakiev P."/>
            <person name="Bell-Pedersen D."/>
            <person name="Nelson M.A."/>
            <person name="Werner-Washburne M."/>
            <person name="Selitrennikoff C.P."/>
            <person name="Kinsey J.A."/>
            <person name="Braun E.L."/>
            <person name="Zelter A."/>
            <person name="Schulte U."/>
            <person name="Kothe G.O."/>
            <person name="Jedd G."/>
            <person name="Mewes H.-W."/>
            <person name="Staben C."/>
            <person name="Marcotte E."/>
            <person name="Greenberg D."/>
            <person name="Roy A."/>
            <person name="Foley K."/>
            <person name="Naylor J."/>
            <person name="Stange-Thomann N."/>
            <person name="Barrett R."/>
            <person name="Gnerre S."/>
            <person name="Kamal M."/>
            <person name="Kamvysselis M."/>
            <person name="Mauceli E.W."/>
            <person name="Bielke C."/>
            <person name="Rudd S."/>
            <person name="Frishman D."/>
            <person name="Krystofova S."/>
            <person name="Rasmussen C."/>
            <person name="Metzenberg R.L."/>
            <person name="Perkins D.D."/>
            <person name="Kroken S."/>
            <person name="Cogoni C."/>
            <person name="Macino G."/>
            <person name="Catcheside D.E.A."/>
            <person name="Li W."/>
            <person name="Pratt R.J."/>
            <person name="Osmani S.A."/>
            <person name="DeSouza C.P.C."/>
            <person name="Glass N.L."/>
            <person name="Orbach M.J."/>
            <person name="Berglund J.A."/>
            <person name="Voelker R."/>
            <person name="Yarden O."/>
            <person name="Plamann M."/>
            <person name="Seiler S."/>
            <person name="Dunlap J.C."/>
            <person name="Radford A."/>
            <person name="Aramayo R."/>
            <person name="Natvig D.O."/>
            <person name="Alex L.A."/>
            <person name="Mannhaupt G."/>
            <person name="Ebbole D.J."/>
            <person name="Freitag M."/>
            <person name="Paulsen I."/>
            <person name="Sachs M.S."/>
            <person name="Lander E.S."/>
            <person name="Nusbaum C."/>
            <person name="Birren B.W."/>
        </authorList>
    </citation>
    <scope>NUCLEOTIDE SEQUENCE [LARGE SCALE GENOMIC DNA]</scope>
    <source>
        <strain>ATCC 24698 / 74-OR23-1A / CBS 708.71 / DSM 1257 / FGSC 987</strain>
    </source>
</reference>
<reference key="2">
    <citation type="journal article" date="1992" name="Gene">
        <title>Sequence and characterization of the met-7 gene of Neurospora crassa.</title>
        <authorList>
            <person name="Crawford J.M."/>
            <person name="Geever R.F."/>
            <person name="Asch D.K."/>
            <person name="Case M.E."/>
        </authorList>
    </citation>
    <scope>NUCLEOTIDE SEQUENCE [GENOMIC DNA] OF 49-621</scope>
</reference>
<feature type="chain" id="PRO_0000114779" description="Cystathionine gamma-synthase">
    <location>
        <begin position="1"/>
        <end position="621"/>
    </location>
</feature>
<feature type="modified residue" description="N6-(pyridoxal phosphate)lysine" evidence="2">
    <location>
        <position position="429"/>
    </location>
</feature>
<feature type="sequence conflict" description="In Ref. 2." evidence="3" ref="2">
    <original>R</original>
    <variation>A</variation>
    <location>
        <position position="194"/>
    </location>
</feature>
<accession>P38675</accession>
<accession>Q7RV94</accession>
<protein>
    <recommendedName>
        <fullName>Cystathionine gamma-synthase</fullName>
        <ecNumber>2.5.1.48</ecNumber>
    </recommendedName>
    <alternativeName>
        <fullName>O-succinylhomoserine (thiol)-lyase</fullName>
    </alternativeName>
</protein>